<protein>
    <recommendedName>
        <fullName evidence="1">Large ribosomal subunit protein bL33B</fullName>
    </recommendedName>
    <alternativeName>
        <fullName evidence="1">50S ribosomal protein L33 2</fullName>
    </alternativeName>
</protein>
<reference key="1">
    <citation type="submission" date="2007-04" db="EMBL/GenBank/DDBJ databases">
        <title>Complete sequence of chromosome of Mycobacterium gilvum PYR-GCK.</title>
        <authorList>
            <consortium name="US DOE Joint Genome Institute"/>
            <person name="Copeland A."/>
            <person name="Lucas S."/>
            <person name="Lapidus A."/>
            <person name="Barry K."/>
            <person name="Detter J.C."/>
            <person name="Glavina del Rio T."/>
            <person name="Hammon N."/>
            <person name="Israni S."/>
            <person name="Dalin E."/>
            <person name="Tice H."/>
            <person name="Pitluck S."/>
            <person name="Chain P."/>
            <person name="Malfatti S."/>
            <person name="Shin M."/>
            <person name="Vergez L."/>
            <person name="Schmutz J."/>
            <person name="Larimer F."/>
            <person name="Land M."/>
            <person name="Hauser L."/>
            <person name="Kyrpides N."/>
            <person name="Mikhailova N."/>
            <person name="Miller C."/>
            <person name="Richardson P."/>
        </authorList>
    </citation>
    <scope>NUCLEOTIDE SEQUENCE [LARGE SCALE GENOMIC DNA]</scope>
    <source>
        <strain>PYR-GCK</strain>
    </source>
</reference>
<feature type="chain" id="PRO_0000356550" description="Large ribosomal subunit protein bL33B">
    <location>
        <begin position="1"/>
        <end position="55"/>
    </location>
</feature>
<evidence type="ECO:0000255" key="1">
    <source>
        <dbReference type="HAMAP-Rule" id="MF_00294"/>
    </source>
</evidence>
<sequence>MASSTDVRPKITLACEVCKHRNYITKKNRRNDPDRLEIKKFCPNCGKHQAHKESR</sequence>
<proteinExistence type="inferred from homology"/>
<keyword id="KW-0687">Ribonucleoprotein</keyword>
<keyword id="KW-0689">Ribosomal protein</keyword>
<name>RL332_MYCGI</name>
<dbReference type="EMBL" id="CP000656">
    <property type="protein sequence ID" value="ABP47588.1"/>
    <property type="molecule type" value="Genomic_DNA"/>
</dbReference>
<dbReference type="SMR" id="A4T1L7"/>
<dbReference type="STRING" id="350054.Mflv_5122"/>
<dbReference type="KEGG" id="mgi:Mflv_5122"/>
<dbReference type="eggNOG" id="COG0267">
    <property type="taxonomic scope" value="Bacteria"/>
</dbReference>
<dbReference type="HOGENOM" id="CLU_190949_0_2_11"/>
<dbReference type="OrthoDB" id="21586at2"/>
<dbReference type="GO" id="GO:0005737">
    <property type="term" value="C:cytoplasm"/>
    <property type="evidence" value="ECO:0007669"/>
    <property type="project" value="UniProtKB-ARBA"/>
</dbReference>
<dbReference type="GO" id="GO:1990904">
    <property type="term" value="C:ribonucleoprotein complex"/>
    <property type="evidence" value="ECO:0007669"/>
    <property type="project" value="UniProtKB-KW"/>
</dbReference>
<dbReference type="GO" id="GO:0005840">
    <property type="term" value="C:ribosome"/>
    <property type="evidence" value="ECO:0007669"/>
    <property type="project" value="UniProtKB-KW"/>
</dbReference>
<dbReference type="GO" id="GO:0003735">
    <property type="term" value="F:structural constituent of ribosome"/>
    <property type="evidence" value="ECO:0007669"/>
    <property type="project" value="InterPro"/>
</dbReference>
<dbReference type="GO" id="GO:0006412">
    <property type="term" value="P:translation"/>
    <property type="evidence" value="ECO:0007669"/>
    <property type="project" value="UniProtKB-UniRule"/>
</dbReference>
<dbReference type="Gene3D" id="2.20.28.120">
    <property type="entry name" value="Ribosomal protein L33"/>
    <property type="match status" value="1"/>
</dbReference>
<dbReference type="HAMAP" id="MF_00294">
    <property type="entry name" value="Ribosomal_bL33"/>
    <property type="match status" value="1"/>
</dbReference>
<dbReference type="InterPro" id="IPR001705">
    <property type="entry name" value="Ribosomal_bL33"/>
</dbReference>
<dbReference type="InterPro" id="IPR018264">
    <property type="entry name" value="Ribosomal_bL33_CS"/>
</dbReference>
<dbReference type="InterPro" id="IPR038584">
    <property type="entry name" value="Ribosomal_bL33_sf"/>
</dbReference>
<dbReference type="InterPro" id="IPR011332">
    <property type="entry name" value="Ribosomal_zn-bd"/>
</dbReference>
<dbReference type="NCBIfam" id="NF001764">
    <property type="entry name" value="PRK00504.1"/>
    <property type="match status" value="1"/>
</dbReference>
<dbReference type="NCBIfam" id="NF001860">
    <property type="entry name" value="PRK00595.1"/>
    <property type="match status" value="1"/>
</dbReference>
<dbReference type="NCBIfam" id="TIGR01023">
    <property type="entry name" value="rpmG_bact"/>
    <property type="match status" value="1"/>
</dbReference>
<dbReference type="PANTHER" id="PTHR43168">
    <property type="entry name" value="50S RIBOSOMAL PROTEIN L33, CHLOROPLASTIC"/>
    <property type="match status" value="1"/>
</dbReference>
<dbReference type="PANTHER" id="PTHR43168:SF2">
    <property type="entry name" value="LARGE RIBOSOMAL SUBUNIT PROTEIN BL33C"/>
    <property type="match status" value="1"/>
</dbReference>
<dbReference type="Pfam" id="PF00471">
    <property type="entry name" value="Ribosomal_L33"/>
    <property type="match status" value="1"/>
</dbReference>
<dbReference type="SUPFAM" id="SSF57829">
    <property type="entry name" value="Zn-binding ribosomal proteins"/>
    <property type="match status" value="1"/>
</dbReference>
<dbReference type="PROSITE" id="PS00582">
    <property type="entry name" value="RIBOSOMAL_L33"/>
    <property type="match status" value="1"/>
</dbReference>
<organism>
    <name type="scientific">Mycolicibacterium gilvum (strain PYR-GCK)</name>
    <name type="common">Mycobacterium gilvum (strain PYR-GCK)</name>
    <dbReference type="NCBI Taxonomy" id="350054"/>
    <lineage>
        <taxon>Bacteria</taxon>
        <taxon>Bacillati</taxon>
        <taxon>Actinomycetota</taxon>
        <taxon>Actinomycetes</taxon>
        <taxon>Mycobacteriales</taxon>
        <taxon>Mycobacteriaceae</taxon>
        <taxon>Mycolicibacterium</taxon>
    </lineage>
</organism>
<gene>
    <name evidence="1" type="primary">rpmG2</name>
    <name type="ordered locus">Mflv_5122</name>
</gene>
<comment type="similarity">
    <text evidence="1">Belongs to the bacterial ribosomal protein bL33 family.</text>
</comment>
<accession>A4T1L7</accession>